<proteinExistence type="inferred from homology"/>
<name>RK23_ORYNI</name>
<evidence type="ECO:0000250" key="1"/>
<evidence type="ECO:0000305" key="2"/>
<evidence type="ECO:0000312" key="3">
    <source>
        <dbReference type="Proteomes" id="UP000006591"/>
    </source>
</evidence>
<feature type="chain" id="PRO_0000129458" description="Large ribosomal subunit protein uL23cz/uL23cy">
    <location>
        <begin position="1"/>
        <end position="93"/>
    </location>
</feature>
<reference key="1">
    <citation type="journal article" date="2004" name="Gene">
        <title>The complete nucleotide sequence of wild rice (Oryza nivara) chloroplast genome: first genome wide comparative sequence analysis of wild and cultivated rice.</title>
        <authorList>
            <person name="Masood M.S."/>
            <person name="Nishikawa T."/>
            <person name="Fukuoka S."/>
            <person name="Njenga P.K."/>
            <person name="Tsudzuki T."/>
            <person name="Kadowaki K."/>
        </authorList>
    </citation>
    <scope>NUCLEOTIDE SEQUENCE [LARGE SCALE GENOMIC DNA]</scope>
    <source>
        <strain evidence="3">cv. SL10</strain>
    </source>
</reference>
<geneLocation type="chloroplast"/>
<dbReference type="EMBL" id="AP006728">
    <property type="protein sequence ID" value="BAD26824.1"/>
    <property type="molecule type" value="Genomic_DNA"/>
</dbReference>
<dbReference type="EMBL" id="AP006728">
    <property type="protein sequence ID" value="BAD26868.1"/>
    <property type="molecule type" value="Genomic_DNA"/>
</dbReference>
<dbReference type="SMR" id="Q6ENC8"/>
<dbReference type="STRING" id="4536.Q6ENC8"/>
<dbReference type="Proteomes" id="UP000006591">
    <property type="component" value="Chloroplast"/>
</dbReference>
<dbReference type="GO" id="GO:0009507">
    <property type="term" value="C:chloroplast"/>
    <property type="evidence" value="ECO:0007669"/>
    <property type="project" value="UniProtKB-SubCell"/>
</dbReference>
<dbReference type="GO" id="GO:0009536">
    <property type="term" value="C:plastid"/>
    <property type="evidence" value="ECO:0000305"/>
    <property type="project" value="Gramene"/>
</dbReference>
<dbReference type="GO" id="GO:1990904">
    <property type="term" value="C:ribonucleoprotein complex"/>
    <property type="evidence" value="ECO:0007669"/>
    <property type="project" value="UniProtKB-KW"/>
</dbReference>
<dbReference type="GO" id="GO:0005840">
    <property type="term" value="C:ribosome"/>
    <property type="evidence" value="ECO:0007669"/>
    <property type="project" value="UniProtKB-KW"/>
</dbReference>
<dbReference type="GO" id="GO:0019843">
    <property type="term" value="F:rRNA binding"/>
    <property type="evidence" value="ECO:0007669"/>
    <property type="project" value="UniProtKB-UniRule"/>
</dbReference>
<dbReference type="GO" id="GO:0003735">
    <property type="term" value="F:structural constituent of ribosome"/>
    <property type="evidence" value="ECO:0007669"/>
    <property type="project" value="InterPro"/>
</dbReference>
<dbReference type="GO" id="GO:0006412">
    <property type="term" value="P:translation"/>
    <property type="evidence" value="ECO:0007669"/>
    <property type="project" value="UniProtKB-UniRule"/>
</dbReference>
<dbReference type="FunFam" id="3.30.70.330:FF:000002">
    <property type="entry name" value="50S ribosomal protein L23, chloroplastic"/>
    <property type="match status" value="1"/>
</dbReference>
<dbReference type="Gene3D" id="3.30.70.330">
    <property type="match status" value="1"/>
</dbReference>
<dbReference type="HAMAP" id="MF_01369_B">
    <property type="entry name" value="Ribosomal_uL23_B"/>
    <property type="match status" value="1"/>
</dbReference>
<dbReference type="InterPro" id="IPR012677">
    <property type="entry name" value="Nucleotide-bd_a/b_plait_sf"/>
</dbReference>
<dbReference type="InterPro" id="IPR013025">
    <property type="entry name" value="Ribosomal_uL23-like"/>
</dbReference>
<dbReference type="InterPro" id="IPR012678">
    <property type="entry name" value="Ribosomal_uL23/eL15/eS24_sf"/>
</dbReference>
<dbReference type="InterPro" id="IPR001014">
    <property type="entry name" value="Ribosomal_uL23_CS"/>
</dbReference>
<dbReference type="PANTHER" id="PTHR11620">
    <property type="entry name" value="60S RIBOSOMAL PROTEIN L23A"/>
    <property type="match status" value="1"/>
</dbReference>
<dbReference type="Pfam" id="PF00276">
    <property type="entry name" value="Ribosomal_L23"/>
    <property type="match status" value="1"/>
</dbReference>
<dbReference type="SUPFAM" id="SSF54189">
    <property type="entry name" value="Ribosomal proteins S24e, L23 and L15e"/>
    <property type="match status" value="1"/>
</dbReference>
<dbReference type="PROSITE" id="PS00050">
    <property type="entry name" value="RIBOSOMAL_L23"/>
    <property type="match status" value="1"/>
</dbReference>
<protein>
    <recommendedName>
        <fullName evidence="2">Large ribosomal subunit protein uL23cz/uL23cy</fullName>
    </recommendedName>
    <alternativeName>
        <fullName>50S ribosomal protein L23, chloroplastic</fullName>
    </alternativeName>
</protein>
<gene>
    <name type="primary">rpl23-A</name>
</gene>
<gene>
    <name type="primary">rpl23-B</name>
</gene>
<organism>
    <name type="scientific">Oryza nivara</name>
    <name type="common">Indian wild rice</name>
    <name type="synonym">Oryza sativa f. spontanea</name>
    <dbReference type="NCBI Taxonomy" id="4536"/>
    <lineage>
        <taxon>Eukaryota</taxon>
        <taxon>Viridiplantae</taxon>
        <taxon>Streptophyta</taxon>
        <taxon>Embryophyta</taxon>
        <taxon>Tracheophyta</taxon>
        <taxon>Spermatophyta</taxon>
        <taxon>Magnoliopsida</taxon>
        <taxon>Liliopsida</taxon>
        <taxon>Poales</taxon>
        <taxon>Poaceae</taxon>
        <taxon>BOP clade</taxon>
        <taxon>Oryzoideae</taxon>
        <taxon>Oryzeae</taxon>
        <taxon>Oryzinae</taxon>
        <taxon>Oryza</taxon>
    </lineage>
</organism>
<accession>Q6ENC8</accession>
<sequence>MDGIKYAVFTEKSLRLLGKNQYTFNVESGFTKTEIKHWVELFFGVKVVAVNSHRLPGKGRRMGPILGHTMHYRRMIITLQPGYSIPLLDREKN</sequence>
<comment type="function">
    <text evidence="1">Binds to 23S rRNA.</text>
</comment>
<comment type="subunit">
    <text evidence="1">Part of the 50S ribosomal subunit.</text>
</comment>
<comment type="subcellular location">
    <subcellularLocation>
        <location>Plastid</location>
        <location>Chloroplast</location>
    </subcellularLocation>
</comment>
<comment type="similarity">
    <text evidence="2">Belongs to the universal ribosomal protein uL23 family.</text>
</comment>
<keyword id="KW-0150">Chloroplast</keyword>
<keyword id="KW-0934">Plastid</keyword>
<keyword id="KW-1185">Reference proteome</keyword>
<keyword id="KW-0687">Ribonucleoprotein</keyword>
<keyword id="KW-0689">Ribosomal protein</keyword>
<keyword id="KW-0694">RNA-binding</keyword>
<keyword id="KW-0699">rRNA-binding</keyword>